<protein>
    <recommendedName>
        <fullName evidence="1">Bifunctional uridylyltransferase/uridylyl-removing enzyme</fullName>
        <shortName evidence="1">UTase/UR</shortName>
    </recommendedName>
    <alternativeName>
        <fullName evidence="1">Bifunctional [protein-PII] modification enzyme</fullName>
    </alternativeName>
    <alternativeName>
        <fullName evidence="1">Bifunctional nitrogen sensor protein</fullName>
    </alternativeName>
    <domain>
        <recommendedName>
            <fullName evidence="1">[Protein-PII] uridylyltransferase</fullName>
            <shortName evidence="1">PII uridylyltransferase</shortName>
            <shortName evidence="1">UTase</shortName>
            <ecNumber evidence="1">2.7.7.59</ecNumber>
        </recommendedName>
    </domain>
    <domain>
        <recommendedName>
            <fullName evidence="1">[Protein-PII]-UMP uridylyl-removing enzyme</fullName>
            <shortName evidence="1">UR</shortName>
            <ecNumber evidence="1">3.1.4.-</ecNumber>
        </recommendedName>
    </domain>
</protein>
<evidence type="ECO:0000255" key="1">
    <source>
        <dbReference type="HAMAP-Rule" id="MF_00277"/>
    </source>
</evidence>
<evidence type="ECO:0000255" key="2">
    <source>
        <dbReference type="PROSITE-ProRule" id="PRU01175"/>
    </source>
</evidence>
<feature type="chain" id="PRO_1000132530" description="Bifunctional uridylyltransferase/uridylyl-removing enzyme">
    <location>
        <begin position="1"/>
        <end position="890"/>
    </location>
</feature>
<feature type="domain" description="HD" evidence="2">
    <location>
        <begin position="468"/>
        <end position="590"/>
    </location>
</feature>
<feature type="domain" description="ACT 1" evidence="1">
    <location>
        <begin position="709"/>
        <end position="789"/>
    </location>
</feature>
<feature type="domain" description="ACT 2" evidence="1">
    <location>
        <begin position="816"/>
        <end position="890"/>
    </location>
</feature>
<feature type="region of interest" description="Uridylyltransferase">
    <location>
        <begin position="1"/>
        <end position="349"/>
    </location>
</feature>
<feature type="region of interest" description="Uridylyl-removing">
    <location>
        <begin position="350"/>
        <end position="708"/>
    </location>
</feature>
<proteinExistence type="inferred from homology"/>
<name>GLND_ECO81</name>
<keyword id="KW-0378">Hydrolase</keyword>
<keyword id="KW-0460">Magnesium</keyword>
<keyword id="KW-0511">Multifunctional enzyme</keyword>
<keyword id="KW-0548">Nucleotidyltransferase</keyword>
<keyword id="KW-0677">Repeat</keyword>
<keyword id="KW-0808">Transferase</keyword>
<sequence>MNTLPEQYANTALPTLHGQPQNPCAWPRDELTVGGIKAHIDTFQRWLGDAFDNGISAEQLIEARTEFIDQLLQRLWIEAGFSQIADLALVAVGGYGRGELHPLSDIDLLILSRKKLPDDQAQKVGELLTLLWDVKLEVGHSVRTLEECMLEGLSDLTVATNLIESRLLIGDVALFLELQKHIFSEGFWPSDKFYAAKVEEQNQRHQRYHGTSYNLEPDIKSSPGGLRDIHTLQWVARRHFGATSLDEMVGFGFLTSAERAELNECLHILWRIRFALHLVISRYDNRLLFDRQLSVAQRLNYSGEGNEPVERMMKDYFRVTRRVSELNQMLLQLFDEAILALPADEKPRPIDDEFQLRGTLIDLRDETLFMRQPEAILRMFYTMVRNSAITGIYSTTLRQLRHARRHLQQPLCNIPEARKLFLSILRHPGAVRRGLLPMHRHSVLGAYMPQWSHIVGQMQFDLFHAYTVDEHTIRVMLKLESFASEETRQRHPLCVDVWPRLPSTELIFIAALFHDIAKGRGGDHSILGAQDVVHFAELHGLNSRETQLVAWLVRQHLLMSVTAQRRDIQDPEVIKQFAEEVQTENRLRYLVCLTVADICATNETLWNSWKQSLLRELYFATEKQLRRGMQNTPDMRERVRHHQLQALALLRMDNIDEEALHQIWSRCRANYFVRHSPNQLAWHARHLLQHDLGKPLVLLSPQATRGGTEIFIWSPDRPYLFAAVCAELDRRNLSVHDAQIFTTRDGMAMDTFIVLEPDGSPLSADRHEVIRFGLEQVLTQSSWQPPQPRRQPAKLRHFTVETEVTFLPTHTDRKSFLELIALDQPGLLARVGKIFADLGISLHGARITTIGERVEDLFIIATADRRALNNELQQEVHQRLTEALNPNDKG</sequence>
<gene>
    <name evidence="1" type="primary">glnD</name>
    <name type="ordered locus">ECED1_0172</name>
</gene>
<comment type="function">
    <text evidence="1">Modifies, by uridylylation and deuridylylation, the PII regulatory proteins (GlnB and homologs), in response to the nitrogen status of the cell that GlnD senses through the glutamine level. Under low glutamine levels, catalyzes the conversion of the PII proteins and UTP to PII-UMP and PPi, while under higher glutamine levels, GlnD hydrolyzes PII-UMP to PII and UMP (deuridylylation). Thus, controls uridylylation state and activity of the PII proteins, and plays an important role in the regulation of nitrogen assimilation and metabolism.</text>
</comment>
<comment type="catalytic activity">
    <reaction evidence="1">
        <text>[protein-PII]-L-tyrosine + UTP = [protein-PII]-uridylyl-L-tyrosine + diphosphate</text>
        <dbReference type="Rhea" id="RHEA:13673"/>
        <dbReference type="Rhea" id="RHEA-COMP:12147"/>
        <dbReference type="Rhea" id="RHEA-COMP:12148"/>
        <dbReference type="ChEBI" id="CHEBI:33019"/>
        <dbReference type="ChEBI" id="CHEBI:46398"/>
        <dbReference type="ChEBI" id="CHEBI:46858"/>
        <dbReference type="ChEBI" id="CHEBI:90602"/>
        <dbReference type="EC" id="2.7.7.59"/>
    </reaction>
</comment>
<comment type="catalytic activity">
    <reaction evidence="1">
        <text>[protein-PII]-uridylyl-L-tyrosine + H2O = [protein-PII]-L-tyrosine + UMP + H(+)</text>
        <dbReference type="Rhea" id="RHEA:48600"/>
        <dbReference type="Rhea" id="RHEA-COMP:12147"/>
        <dbReference type="Rhea" id="RHEA-COMP:12148"/>
        <dbReference type="ChEBI" id="CHEBI:15377"/>
        <dbReference type="ChEBI" id="CHEBI:15378"/>
        <dbReference type="ChEBI" id="CHEBI:46858"/>
        <dbReference type="ChEBI" id="CHEBI:57865"/>
        <dbReference type="ChEBI" id="CHEBI:90602"/>
    </reaction>
</comment>
<comment type="cofactor">
    <cofactor evidence="1">
        <name>Mg(2+)</name>
        <dbReference type="ChEBI" id="CHEBI:18420"/>
    </cofactor>
</comment>
<comment type="activity regulation">
    <text evidence="1">Uridylyltransferase (UTase) activity is inhibited by glutamine, while glutamine activates uridylyl-removing (UR) activity.</text>
</comment>
<comment type="domain">
    <text evidence="1">Has four distinct domains: an N-terminal nucleotidyltransferase (NT) domain responsible for UTase activity, a central HD domain that encodes UR activity, and two C-terminal ACT domains that seem to have a role in glutamine sensing.</text>
</comment>
<comment type="similarity">
    <text evidence="1">Belongs to the GlnD family.</text>
</comment>
<reference key="1">
    <citation type="journal article" date="2009" name="PLoS Genet.">
        <title>Organised genome dynamics in the Escherichia coli species results in highly diverse adaptive paths.</title>
        <authorList>
            <person name="Touchon M."/>
            <person name="Hoede C."/>
            <person name="Tenaillon O."/>
            <person name="Barbe V."/>
            <person name="Baeriswyl S."/>
            <person name="Bidet P."/>
            <person name="Bingen E."/>
            <person name="Bonacorsi S."/>
            <person name="Bouchier C."/>
            <person name="Bouvet O."/>
            <person name="Calteau A."/>
            <person name="Chiapello H."/>
            <person name="Clermont O."/>
            <person name="Cruveiller S."/>
            <person name="Danchin A."/>
            <person name="Diard M."/>
            <person name="Dossat C."/>
            <person name="Karoui M.E."/>
            <person name="Frapy E."/>
            <person name="Garry L."/>
            <person name="Ghigo J.M."/>
            <person name="Gilles A.M."/>
            <person name="Johnson J."/>
            <person name="Le Bouguenec C."/>
            <person name="Lescat M."/>
            <person name="Mangenot S."/>
            <person name="Martinez-Jehanne V."/>
            <person name="Matic I."/>
            <person name="Nassif X."/>
            <person name="Oztas S."/>
            <person name="Petit M.A."/>
            <person name="Pichon C."/>
            <person name="Rouy Z."/>
            <person name="Ruf C.S."/>
            <person name="Schneider D."/>
            <person name="Tourret J."/>
            <person name="Vacherie B."/>
            <person name="Vallenet D."/>
            <person name="Medigue C."/>
            <person name="Rocha E.P.C."/>
            <person name="Denamur E."/>
        </authorList>
    </citation>
    <scope>NUCLEOTIDE SEQUENCE [LARGE SCALE GENOMIC DNA]</scope>
    <source>
        <strain>ED1a</strain>
    </source>
</reference>
<accession>B7MP27</accession>
<organism>
    <name type="scientific">Escherichia coli O81 (strain ED1a)</name>
    <dbReference type="NCBI Taxonomy" id="585397"/>
    <lineage>
        <taxon>Bacteria</taxon>
        <taxon>Pseudomonadati</taxon>
        <taxon>Pseudomonadota</taxon>
        <taxon>Gammaproteobacteria</taxon>
        <taxon>Enterobacterales</taxon>
        <taxon>Enterobacteriaceae</taxon>
        <taxon>Escherichia</taxon>
    </lineage>
</organism>
<dbReference type="EC" id="2.7.7.59" evidence="1"/>
<dbReference type="EC" id="3.1.4.-" evidence="1"/>
<dbReference type="EMBL" id="CU928162">
    <property type="protein sequence ID" value="CAR06392.1"/>
    <property type="molecule type" value="Genomic_DNA"/>
</dbReference>
<dbReference type="RefSeq" id="WP_001094531.1">
    <property type="nucleotide sequence ID" value="NC_011745.1"/>
</dbReference>
<dbReference type="SMR" id="B7MP27"/>
<dbReference type="KEGG" id="ecq:ECED1_0172"/>
<dbReference type="HOGENOM" id="CLU_012833_0_0_6"/>
<dbReference type="Proteomes" id="UP000000748">
    <property type="component" value="Chromosome"/>
</dbReference>
<dbReference type="GO" id="GO:0008773">
    <property type="term" value="F:[protein-PII] uridylyltransferase activity"/>
    <property type="evidence" value="ECO:0007669"/>
    <property type="project" value="UniProtKB-UniRule"/>
</dbReference>
<dbReference type="GO" id="GO:0008081">
    <property type="term" value="F:phosphoric diester hydrolase activity"/>
    <property type="evidence" value="ECO:0007669"/>
    <property type="project" value="UniProtKB-UniRule"/>
</dbReference>
<dbReference type="GO" id="GO:0006808">
    <property type="term" value="P:regulation of nitrogen utilization"/>
    <property type="evidence" value="ECO:0007669"/>
    <property type="project" value="UniProtKB-UniRule"/>
</dbReference>
<dbReference type="CDD" id="cd04899">
    <property type="entry name" value="ACT_ACR-UUR-like_2"/>
    <property type="match status" value="1"/>
</dbReference>
<dbReference type="CDD" id="cd04900">
    <property type="entry name" value="ACT_UUR-like_1"/>
    <property type="match status" value="1"/>
</dbReference>
<dbReference type="CDD" id="cd00077">
    <property type="entry name" value="HDc"/>
    <property type="match status" value="1"/>
</dbReference>
<dbReference type="CDD" id="cd05401">
    <property type="entry name" value="NT_GlnE_GlnD_like"/>
    <property type="match status" value="1"/>
</dbReference>
<dbReference type="FunFam" id="1.10.3210.10:FF:000005">
    <property type="entry name" value="Bifunctional uridylyltransferase/uridylyl-removing enzyme"/>
    <property type="match status" value="1"/>
</dbReference>
<dbReference type="Gene3D" id="1.10.3210.10">
    <property type="entry name" value="Hypothetical protein af1432"/>
    <property type="match status" value="1"/>
</dbReference>
<dbReference type="HAMAP" id="MF_00277">
    <property type="entry name" value="PII_uridylyl_transf"/>
    <property type="match status" value="1"/>
</dbReference>
<dbReference type="InterPro" id="IPR045865">
    <property type="entry name" value="ACT-like_dom_sf"/>
</dbReference>
<dbReference type="InterPro" id="IPR002912">
    <property type="entry name" value="ACT_dom"/>
</dbReference>
<dbReference type="InterPro" id="IPR003607">
    <property type="entry name" value="HD/PDEase_dom"/>
</dbReference>
<dbReference type="InterPro" id="IPR006674">
    <property type="entry name" value="HD_domain"/>
</dbReference>
<dbReference type="InterPro" id="IPR043519">
    <property type="entry name" value="NT_sf"/>
</dbReference>
<dbReference type="InterPro" id="IPR013546">
    <property type="entry name" value="PII_UdlTrfase/GS_AdlTrfase"/>
</dbReference>
<dbReference type="InterPro" id="IPR002934">
    <property type="entry name" value="Polymerase_NTP_transf_dom"/>
</dbReference>
<dbReference type="InterPro" id="IPR010043">
    <property type="entry name" value="UTase/UR"/>
</dbReference>
<dbReference type="NCBIfam" id="NF002487">
    <property type="entry name" value="PRK01759.1"/>
    <property type="match status" value="1"/>
</dbReference>
<dbReference type="NCBIfam" id="NF003448">
    <property type="entry name" value="PRK05007.1"/>
    <property type="match status" value="1"/>
</dbReference>
<dbReference type="NCBIfam" id="TIGR01693">
    <property type="entry name" value="UTase_glnD"/>
    <property type="match status" value="1"/>
</dbReference>
<dbReference type="PANTHER" id="PTHR47320">
    <property type="entry name" value="BIFUNCTIONAL URIDYLYLTRANSFERASE/URIDYLYL-REMOVING ENZYME"/>
    <property type="match status" value="1"/>
</dbReference>
<dbReference type="PANTHER" id="PTHR47320:SF1">
    <property type="entry name" value="BIFUNCTIONAL URIDYLYLTRANSFERASE_URIDYLYL-REMOVING ENZYME"/>
    <property type="match status" value="1"/>
</dbReference>
<dbReference type="Pfam" id="PF01842">
    <property type="entry name" value="ACT"/>
    <property type="match status" value="2"/>
</dbReference>
<dbReference type="Pfam" id="PF08335">
    <property type="entry name" value="GlnD_UR_UTase"/>
    <property type="match status" value="1"/>
</dbReference>
<dbReference type="Pfam" id="PF01966">
    <property type="entry name" value="HD"/>
    <property type="match status" value="1"/>
</dbReference>
<dbReference type="Pfam" id="PF01909">
    <property type="entry name" value="NTP_transf_2"/>
    <property type="match status" value="1"/>
</dbReference>
<dbReference type="PIRSF" id="PIRSF006288">
    <property type="entry name" value="PII_uridyltransf"/>
    <property type="match status" value="1"/>
</dbReference>
<dbReference type="SMART" id="SM00471">
    <property type="entry name" value="HDc"/>
    <property type="match status" value="1"/>
</dbReference>
<dbReference type="SUPFAM" id="SSF55021">
    <property type="entry name" value="ACT-like"/>
    <property type="match status" value="2"/>
</dbReference>
<dbReference type="SUPFAM" id="SSF109604">
    <property type="entry name" value="HD-domain/PDEase-like"/>
    <property type="match status" value="1"/>
</dbReference>
<dbReference type="SUPFAM" id="SSF81301">
    <property type="entry name" value="Nucleotidyltransferase"/>
    <property type="match status" value="1"/>
</dbReference>
<dbReference type="SUPFAM" id="SSF81593">
    <property type="entry name" value="Nucleotidyltransferase substrate binding subunit/domain"/>
    <property type="match status" value="1"/>
</dbReference>
<dbReference type="PROSITE" id="PS51671">
    <property type="entry name" value="ACT"/>
    <property type="match status" value="2"/>
</dbReference>
<dbReference type="PROSITE" id="PS51831">
    <property type="entry name" value="HD"/>
    <property type="match status" value="1"/>
</dbReference>